<feature type="chain" id="PRO_1000118361" description="Acetylglutamate kinase">
    <location>
        <begin position="1"/>
        <end position="293"/>
    </location>
</feature>
<feature type="binding site" evidence="1">
    <location>
        <begin position="65"/>
        <end position="66"/>
    </location>
    <ligand>
        <name>substrate</name>
    </ligand>
</feature>
<feature type="binding site" evidence="1">
    <location>
        <position position="87"/>
    </location>
    <ligand>
        <name>substrate</name>
    </ligand>
</feature>
<feature type="binding site" evidence="1">
    <location>
        <position position="180"/>
    </location>
    <ligand>
        <name>substrate</name>
    </ligand>
</feature>
<feature type="site" description="Transition state stabilizer" evidence="1">
    <location>
        <position position="30"/>
    </location>
</feature>
<feature type="site" description="Transition state stabilizer" evidence="1">
    <location>
        <position position="240"/>
    </location>
</feature>
<dbReference type="EC" id="2.7.2.8" evidence="1"/>
<dbReference type="EMBL" id="CP001150">
    <property type="protein sequence ID" value="ACM02322.1"/>
    <property type="molecule type" value="Genomic_DNA"/>
</dbReference>
<dbReference type="RefSeq" id="WP_002721433.1">
    <property type="nucleotide sequence ID" value="NC_011963.1"/>
</dbReference>
<dbReference type="SMR" id="B9KP00"/>
<dbReference type="GeneID" id="67447842"/>
<dbReference type="KEGG" id="rsk:RSKD131_2462"/>
<dbReference type="HOGENOM" id="CLU_053680_0_0_5"/>
<dbReference type="UniPathway" id="UPA00068">
    <property type="reaction ID" value="UER00107"/>
</dbReference>
<dbReference type="GO" id="GO:0005737">
    <property type="term" value="C:cytoplasm"/>
    <property type="evidence" value="ECO:0007669"/>
    <property type="project" value="UniProtKB-SubCell"/>
</dbReference>
<dbReference type="GO" id="GO:0003991">
    <property type="term" value="F:acetylglutamate kinase activity"/>
    <property type="evidence" value="ECO:0007669"/>
    <property type="project" value="UniProtKB-UniRule"/>
</dbReference>
<dbReference type="GO" id="GO:0005524">
    <property type="term" value="F:ATP binding"/>
    <property type="evidence" value="ECO:0007669"/>
    <property type="project" value="UniProtKB-UniRule"/>
</dbReference>
<dbReference type="GO" id="GO:0042450">
    <property type="term" value="P:arginine biosynthetic process via ornithine"/>
    <property type="evidence" value="ECO:0007669"/>
    <property type="project" value="UniProtKB-UniRule"/>
</dbReference>
<dbReference type="GO" id="GO:0006526">
    <property type="term" value="P:L-arginine biosynthetic process"/>
    <property type="evidence" value="ECO:0007669"/>
    <property type="project" value="UniProtKB-UniPathway"/>
</dbReference>
<dbReference type="CDD" id="cd04250">
    <property type="entry name" value="AAK_NAGK-C"/>
    <property type="match status" value="1"/>
</dbReference>
<dbReference type="FunFam" id="3.40.1160.10:FF:000004">
    <property type="entry name" value="Acetylglutamate kinase"/>
    <property type="match status" value="1"/>
</dbReference>
<dbReference type="Gene3D" id="3.40.1160.10">
    <property type="entry name" value="Acetylglutamate kinase-like"/>
    <property type="match status" value="1"/>
</dbReference>
<dbReference type="HAMAP" id="MF_00082">
    <property type="entry name" value="ArgB"/>
    <property type="match status" value="1"/>
</dbReference>
<dbReference type="InterPro" id="IPR036393">
    <property type="entry name" value="AceGlu_kinase-like_sf"/>
</dbReference>
<dbReference type="InterPro" id="IPR004662">
    <property type="entry name" value="AcgluKinase_fam"/>
</dbReference>
<dbReference type="InterPro" id="IPR037528">
    <property type="entry name" value="ArgB"/>
</dbReference>
<dbReference type="InterPro" id="IPR001048">
    <property type="entry name" value="Asp/Glu/Uridylate_kinase"/>
</dbReference>
<dbReference type="InterPro" id="IPR001057">
    <property type="entry name" value="Glu/AcGlu_kinase"/>
</dbReference>
<dbReference type="InterPro" id="IPR041727">
    <property type="entry name" value="NAGK-C"/>
</dbReference>
<dbReference type="NCBIfam" id="TIGR00761">
    <property type="entry name" value="argB"/>
    <property type="match status" value="1"/>
</dbReference>
<dbReference type="PANTHER" id="PTHR23342">
    <property type="entry name" value="N-ACETYLGLUTAMATE SYNTHASE"/>
    <property type="match status" value="1"/>
</dbReference>
<dbReference type="PANTHER" id="PTHR23342:SF0">
    <property type="entry name" value="N-ACETYLGLUTAMATE SYNTHASE, MITOCHONDRIAL"/>
    <property type="match status" value="1"/>
</dbReference>
<dbReference type="Pfam" id="PF00696">
    <property type="entry name" value="AA_kinase"/>
    <property type="match status" value="1"/>
</dbReference>
<dbReference type="PIRSF" id="PIRSF000728">
    <property type="entry name" value="NAGK"/>
    <property type="match status" value="1"/>
</dbReference>
<dbReference type="PRINTS" id="PR00474">
    <property type="entry name" value="GLU5KINASE"/>
</dbReference>
<dbReference type="SUPFAM" id="SSF53633">
    <property type="entry name" value="Carbamate kinase-like"/>
    <property type="match status" value="1"/>
</dbReference>
<sequence length="293" mass="30731">MTRDPIATARTLSEALPYLQRYAGAVVVVKFGGNAMGDEAAMAEFARDIVLMRQVGVNPVVVHGGGPMINELLGKLGIKSEFVRGKRVTDKATVEVVEMVLSGLVNKRIVQAINDQGGRAVGISGKDDDLMVCVADDPDLGFVGKPVEMNVQVLRDLYNAGIIPVVAPVATGMADNETFNVNGDTAAGAIAGALQADRLLLLTDVAGVKDASGEVLSQLTPSQVREMVASGTISGGMIPKTETALAALDEGVRAVVILDGRTPNACLIEIFTDEGAGTIIRSTEPRVKPRVRR</sequence>
<evidence type="ECO:0000255" key="1">
    <source>
        <dbReference type="HAMAP-Rule" id="MF_00082"/>
    </source>
</evidence>
<reference key="1">
    <citation type="journal article" date="2009" name="J. Bacteriol.">
        <title>Complete genome sequence of Rhodobacter sphaeroides KD131.</title>
        <authorList>
            <person name="Lim S.-K."/>
            <person name="Kim S.J."/>
            <person name="Cha S.H."/>
            <person name="Oh Y.-K."/>
            <person name="Rhee H.-J."/>
            <person name="Kim M.-S."/>
            <person name="Lee J.K."/>
        </authorList>
    </citation>
    <scope>NUCLEOTIDE SEQUENCE [LARGE SCALE GENOMIC DNA]</scope>
    <source>
        <strain>KD131 / KCTC 12085</strain>
    </source>
</reference>
<protein>
    <recommendedName>
        <fullName evidence="1">Acetylglutamate kinase</fullName>
        <ecNumber evidence="1">2.7.2.8</ecNumber>
    </recommendedName>
    <alternativeName>
        <fullName evidence="1">N-acetyl-L-glutamate 5-phosphotransferase</fullName>
    </alternativeName>
    <alternativeName>
        <fullName evidence="1">NAG kinase</fullName>
        <shortName evidence="1">NAGK</shortName>
    </alternativeName>
</protein>
<organism>
    <name type="scientific">Cereibacter sphaeroides (strain KD131 / KCTC 12085)</name>
    <name type="common">Rhodobacter sphaeroides</name>
    <dbReference type="NCBI Taxonomy" id="557760"/>
    <lineage>
        <taxon>Bacteria</taxon>
        <taxon>Pseudomonadati</taxon>
        <taxon>Pseudomonadota</taxon>
        <taxon>Alphaproteobacteria</taxon>
        <taxon>Rhodobacterales</taxon>
        <taxon>Paracoccaceae</taxon>
        <taxon>Cereibacter</taxon>
    </lineage>
</organism>
<accession>B9KP00</accession>
<comment type="function">
    <text evidence="1">Catalyzes the ATP-dependent phosphorylation of N-acetyl-L-glutamate.</text>
</comment>
<comment type="catalytic activity">
    <reaction evidence="1">
        <text>N-acetyl-L-glutamate + ATP = N-acetyl-L-glutamyl 5-phosphate + ADP</text>
        <dbReference type="Rhea" id="RHEA:14629"/>
        <dbReference type="ChEBI" id="CHEBI:30616"/>
        <dbReference type="ChEBI" id="CHEBI:44337"/>
        <dbReference type="ChEBI" id="CHEBI:57936"/>
        <dbReference type="ChEBI" id="CHEBI:456216"/>
        <dbReference type="EC" id="2.7.2.8"/>
    </reaction>
</comment>
<comment type="pathway">
    <text evidence="1">Amino-acid biosynthesis; L-arginine biosynthesis; N(2)-acetyl-L-ornithine from L-glutamate: step 2/4.</text>
</comment>
<comment type="subcellular location">
    <subcellularLocation>
        <location evidence="1">Cytoplasm</location>
    </subcellularLocation>
</comment>
<comment type="similarity">
    <text evidence="1">Belongs to the acetylglutamate kinase family. ArgB subfamily.</text>
</comment>
<keyword id="KW-0028">Amino-acid biosynthesis</keyword>
<keyword id="KW-0055">Arginine biosynthesis</keyword>
<keyword id="KW-0067">ATP-binding</keyword>
<keyword id="KW-0963">Cytoplasm</keyword>
<keyword id="KW-0418">Kinase</keyword>
<keyword id="KW-0547">Nucleotide-binding</keyword>
<keyword id="KW-0808">Transferase</keyword>
<name>ARGB_CERSK</name>
<gene>
    <name evidence="1" type="primary">argB</name>
    <name type="ordered locus">RSKD131_2462</name>
</gene>
<proteinExistence type="inferred from homology"/>